<organism>
    <name type="scientific">Coxiella burnetii (strain CbuG_Q212)</name>
    <name type="common">Coxiella burnetii (strain Q212)</name>
    <dbReference type="NCBI Taxonomy" id="434923"/>
    <lineage>
        <taxon>Bacteria</taxon>
        <taxon>Pseudomonadati</taxon>
        <taxon>Pseudomonadota</taxon>
        <taxon>Gammaproteobacteria</taxon>
        <taxon>Legionellales</taxon>
        <taxon>Coxiellaceae</taxon>
        <taxon>Coxiella</taxon>
    </lineage>
</organism>
<proteinExistence type="inferred from homology"/>
<sequence>MSVLVPMVVEQTSRGERAYDIYSRLLKDRVIFLVGQVEDHMANLAIAQMLFLESENPNKDINLYINSPGGAVTSAMAIYDTMQFVKPDVRTLCIGQAASAGALLLAGGAKGKRHCLPHSSVMIHQVLGGYQGQGTDIQIHAKQTQRVSDQLNQILAKHTGKDIERVEKDTNRDYFLTPEEAVEYGLIDSIFTERP</sequence>
<gene>
    <name evidence="1" type="primary">clpP</name>
    <name type="ordered locus">CbuG_1265</name>
</gene>
<keyword id="KW-0963">Cytoplasm</keyword>
<keyword id="KW-0378">Hydrolase</keyword>
<keyword id="KW-0645">Protease</keyword>
<keyword id="KW-0720">Serine protease</keyword>
<dbReference type="EC" id="3.4.21.92" evidence="1"/>
<dbReference type="EMBL" id="CP001019">
    <property type="protein sequence ID" value="ACJ18588.1"/>
    <property type="molecule type" value="Genomic_DNA"/>
</dbReference>
<dbReference type="RefSeq" id="WP_005771772.1">
    <property type="nucleotide sequence ID" value="NC_011527.1"/>
</dbReference>
<dbReference type="SMR" id="B6J0W0"/>
<dbReference type="MEROPS" id="S14.001"/>
<dbReference type="KEGG" id="cbg:CbuG_1265"/>
<dbReference type="HOGENOM" id="CLU_058707_3_2_6"/>
<dbReference type="GO" id="GO:0005737">
    <property type="term" value="C:cytoplasm"/>
    <property type="evidence" value="ECO:0007669"/>
    <property type="project" value="UniProtKB-SubCell"/>
</dbReference>
<dbReference type="GO" id="GO:0009368">
    <property type="term" value="C:endopeptidase Clp complex"/>
    <property type="evidence" value="ECO:0007669"/>
    <property type="project" value="TreeGrafter"/>
</dbReference>
<dbReference type="GO" id="GO:0004176">
    <property type="term" value="F:ATP-dependent peptidase activity"/>
    <property type="evidence" value="ECO:0007669"/>
    <property type="project" value="InterPro"/>
</dbReference>
<dbReference type="GO" id="GO:0051117">
    <property type="term" value="F:ATPase binding"/>
    <property type="evidence" value="ECO:0007669"/>
    <property type="project" value="TreeGrafter"/>
</dbReference>
<dbReference type="GO" id="GO:0004252">
    <property type="term" value="F:serine-type endopeptidase activity"/>
    <property type="evidence" value="ECO:0007669"/>
    <property type="project" value="UniProtKB-UniRule"/>
</dbReference>
<dbReference type="GO" id="GO:0006515">
    <property type="term" value="P:protein quality control for misfolded or incompletely synthesized proteins"/>
    <property type="evidence" value="ECO:0007669"/>
    <property type="project" value="TreeGrafter"/>
</dbReference>
<dbReference type="CDD" id="cd07017">
    <property type="entry name" value="S14_ClpP_2"/>
    <property type="match status" value="1"/>
</dbReference>
<dbReference type="FunFam" id="3.90.226.10:FF:000001">
    <property type="entry name" value="ATP-dependent Clp protease proteolytic subunit"/>
    <property type="match status" value="1"/>
</dbReference>
<dbReference type="Gene3D" id="3.90.226.10">
    <property type="entry name" value="2-enoyl-CoA Hydratase, Chain A, domain 1"/>
    <property type="match status" value="1"/>
</dbReference>
<dbReference type="HAMAP" id="MF_00444">
    <property type="entry name" value="ClpP"/>
    <property type="match status" value="1"/>
</dbReference>
<dbReference type="InterPro" id="IPR001907">
    <property type="entry name" value="ClpP"/>
</dbReference>
<dbReference type="InterPro" id="IPR029045">
    <property type="entry name" value="ClpP/crotonase-like_dom_sf"/>
</dbReference>
<dbReference type="InterPro" id="IPR023562">
    <property type="entry name" value="ClpP/TepA"/>
</dbReference>
<dbReference type="InterPro" id="IPR018215">
    <property type="entry name" value="ClpP_Ser_AS"/>
</dbReference>
<dbReference type="NCBIfam" id="TIGR00493">
    <property type="entry name" value="clpP"/>
    <property type="match status" value="1"/>
</dbReference>
<dbReference type="NCBIfam" id="NF001368">
    <property type="entry name" value="PRK00277.1"/>
    <property type="match status" value="1"/>
</dbReference>
<dbReference type="NCBIfam" id="NF009205">
    <property type="entry name" value="PRK12553.1"/>
    <property type="match status" value="1"/>
</dbReference>
<dbReference type="PANTHER" id="PTHR10381">
    <property type="entry name" value="ATP-DEPENDENT CLP PROTEASE PROTEOLYTIC SUBUNIT"/>
    <property type="match status" value="1"/>
</dbReference>
<dbReference type="PANTHER" id="PTHR10381:SF70">
    <property type="entry name" value="ATP-DEPENDENT CLP PROTEASE PROTEOLYTIC SUBUNIT"/>
    <property type="match status" value="1"/>
</dbReference>
<dbReference type="Pfam" id="PF00574">
    <property type="entry name" value="CLP_protease"/>
    <property type="match status" value="1"/>
</dbReference>
<dbReference type="PRINTS" id="PR00127">
    <property type="entry name" value="CLPPROTEASEP"/>
</dbReference>
<dbReference type="SUPFAM" id="SSF52096">
    <property type="entry name" value="ClpP/crotonase"/>
    <property type="match status" value="1"/>
</dbReference>
<dbReference type="PROSITE" id="PS00381">
    <property type="entry name" value="CLP_PROTEASE_SER"/>
    <property type="match status" value="1"/>
</dbReference>
<accession>B6J0W0</accession>
<name>CLPP_COXB2</name>
<feature type="chain" id="PRO_1000189639" description="ATP-dependent Clp protease proteolytic subunit">
    <location>
        <begin position="1"/>
        <end position="195"/>
    </location>
</feature>
<feature type="active site" description="Nucleophile" evidence="1">
    <location>
        <position position="99"/>
    </location>
</feature>
<feature type="active site" evidence="1">
    <location>
        <position position="124"/>
    </location>
</feature>
<protein>
    <recommendedName>
        <fullName evidence="1">ATP-dependent Clp protease proteolytic subunit</fullName>
        <ecNumber evidence="1">3.4.21.92</ecNumber>
    </recommendedName>
    <alternativeName>
        <fullName evidence="1">Endopeptidase Clp</fullName>
    </alternativeName>
</protein>
<evidence type="ECO:0000255" key="1">
    <source>
        <dbReference type="HAMAP-Rule" id="MF_00444"/>
    </source>
</evidence>
<reference key="1">
    <citation type="journal article" date="2009" name="Infect. Immun.">
        <title>Comparative genomics reveal extensive transposon-mediated genomic plasticity and diversity among potential effector proteins within the genus Coxiella.</title>
        <authorList>
            <person name="Beare P.A."/>
            <person name="Unsworth N."/>
            <person name="Andoh M."/>
            <person name="Voth D.E."/>
            <person name="Omsland A."/>
            <person name="Gilk S.D."/>
            <person name="Williams K.P."/>
            <person name="Sobral B.W."/>
            <person name="Kupko J.J. III"/>
            <person name="Porcella S.F."/>
            <person name="Samuel J.E."/>
            <person name="Heinzen R.A."/>
        </authorList>
    </citation>
    <scope>NUCLEOTIDE SEQUENCE [LARGE SCALE GENOMIC DNA]</scope>
    <source>
        <strain>CbuG_Q212</strain>
    </source>
</reference>
<comment type="function">
    <text evidence="1">Cleaves peptides in various proteins in a process that requires ATP hydrolysis. Has a chymotrypsin-like activity. Plays a major role in the degradation of misfolded proteins.</text>
</comment>
<comment type="catalytic activity">
    <reaction evidence="1">
        <text>Hydrolysis of proteins to small peptides in the presence of ATP and magnesium. alpha-casein is the usual test substrate. In the absence of ATP, only oligopeptides shorter than five residues are hydrolyzed (such as succinyl-Leu-Tyr-|-NHMec, and Leu-Tyr-Leu-|-Tyr-Trp, in which cleavage of the -Tyr-|-Leu- and -Tyr-|-Trp bonds also occurs).</text>
        <dbReference type="EC" id="3.4.21.92"/>
    </reaction>
</comment>
<comment type="subunit">
    <text evidence="1">Fourteen ClpP subunits assemble into 2 heptameric rings which stack back to back to give a disk-like structure with a central cavity, resembling the structure of eukaryotic proteasomes.</text>
</comment>
<comment type="subcellular location">
    <subcellularLocation>
        <location evidence="1">Cytoplasm</location>
    </subcellularLocation>
</comment>
<comment type="similarity">
    <text evidence="1">Belongs to the peptidase S14 family.</text>
</comment>